<organism>
    <name type="scientific">Escherichia coli (strain K12)</name>
    <dbReference type="NCBI Taxonomy" id="83333"/>
    <lineage>
        <taxon>Bacteria</taxon>
        <taxon>Pseudomonadati</taxon>
        <taxon>Pseudomonadota</taxon>
        <taxon>Gammaproteobacteria</taxon>
        <taxon>Enterobacterales</taxon>
        <taxon>Enterobacteriaceae</taxon>
        <taxon>Escherichia</taxon>
    </lineage>
</organism>
<evidence type="ECO:0000250" key="1">
    <source>
        <dbReference type="UniProtKB" id="P9WKK7"/>
    </source>
</evidence>
<evidence type="ECO:0000269" key="2">
    <source>
    </source>
</evidence>
<evidence type="ECO:0000269" key="3">
    <source>
    </source>
</evidence>
<evidence type="ECO:0000269" key="4">
    <source>
    </source>
</evidence>
<evidence type="ECO:0000269" key="5">
    <source>
    </source>
</evidence>
<evidence type="ECO:0000269" key="6">
    <source>
    </source>
</evidence>
<evidence type="ECO:0000269" key="7">
    <source>
    </source>
</evidence>
<evidence type="ECO:0000269" key="8">
    <source>
    </source>
</evidence>
<evidence type="ECO:0000269" key="9">
    <source ref="9"/>
</evidence>
<evidence type="ECO:0000303" key="10">
    <source>
    </source>
</evidence>
<evidence type="ECO:0000303" key="11">
    <source ref="9"/>
</evidence>
<evidence type="ECO:0000305" key="12"/>
<evidence type="ECO:0000305" key="13">
    <source>
    </source>
</evidence>
<evidence type="ECO:0007829" key="14">
    <source>
        <dbReference type="PDB" id="1IGW"/>
    </source>
</evidence>
<proteinExistence type="evidence at protein level"/>
<reference key="1">
    <citation type="journal article" date="1988" name="Nucleic Acids Res.">
        <title>Nucleotide sequence of the aceB gene encoding malate synthase A in Escherichia coli.</title>
        <authorList>
            <person name="Byrne C.R."/>
            <person name="Stokes H.W."/>
            <person name="Ward K.A."/>
        </authorList>
    </citation>
    <scope>NUCLEOTIDE SEQUENCE [GENOMIC DNA]</scope>
    <source>
        <strain>K12</strain>
    </source>
</reference>
<reference key="2">
    <citation type="journal article" date="1988" name="Nucleic Acids Res.">
        <title>Nucleotide sequence of the aceB gene encoding malate synthase A in Escherichia coli.</title>
        <authorList>
            <person name="Byrne C.R."/>
            <person name="Stokes H.W."/>
            <person name="Ward K.A."/>
        </authorList>
    </citation>
    <scope>NUCLEOTIDE SEQUENCE [GENOMIC DNA]</scope>
    <source>
        <strain>K12</strain>
    </source>
</reference>
<reference key="3">
    <citation type="journal article" date="1988" name="Nucleic Acids Res.">
        <title>Nucleotide sequence of the aceA gene coding for isocitrate lyase in Escherichia coli.</title>
        <authorList>
            <person name="Rieul C."/>
            <person name="Bleicher F."/>
            <person name="Duclos B."/>
            <person name="Cortay J.-C."/>
            <person name="Cozzone A.J."/>
        </authorList>
    </citation>
    <scope>NUCLEOTIDE SEQUENCE [GENOMIC DNA]</scope>
    <source>
        <strain>K12</strain>
    </source>
</reference>
<reference key="4">
    <citation type="journal article" date="1988" name="J. Bacteriol.">
        <title>Isolation, hyperexpression, and sequencing of the aceA gene encoding isocitrate lyase in Escherichia coli.</title>
        <authorList>
            <person name="Matsuoka M."/>
            <person name="McFadden B.A."/>
        </authorList>
    </citation>
    <scope>NUCLEOTIDE SEQUENCE [GENOMIC DNA]</scope>
    <scope>PROTEIN SEQUENCE OF 2-17</scope>
    <scope>SUBUNIT</scope>
</reference>
<reference key="5">
    <citation type="journal article" date="1993" name="Nucleic Acids Res.">
        <title>Analysis of the Escherichia coli genome. IV. DNA sequence of the region from 89.2 to 92.8 minutes.</title>
        <authorList>
            <person name="Blattner F.R."/>
            <person name="Burland V.D."/>
            <person name="Plunkett G. III"/>
            <person name="Sofia H.J."/>
            <person name="Daniels D.L."/>
        </authorList>
    </citation>
    <scope>NUCLEOTIDE SEQUENCE [LARGE SCALE GENOMIC DNA]</scope>
    <source>
        <strain>K12 / MG1655 / ATCC 47076</strain>
    </source>
</reference>
<reference key="6">
    <citation type="journal article" date="1997" name="Science">
        <title>The complete genome sequence of Escherichia coli K-12.</title>
        <authorList>
            <person name="Blattner F.R."/>
            <person name="Plunkett G. III"/>
            <person name="Bloch C.A."/>
            <person name="Perna N.T."/>
            <person name="Burland V."/>
            <person name="Riley M."/>
            <person name="Collado-Vides J."/>
            <person name="Glasner J.D."/>
            <person name="Rode C.K."/>
            <person name="Mayhew G.F."/>
            <person name="Gregor J."/>
            <person name="Davis N.W."/>
            <person name="Kirkpatrick H.A."/>
            <person name="Goeden M.A."/>
            <person name="Rose D.J."/>
            <person name="Mau B."/>
            <person name="Shao Y."/>
        </authorList>
    </citation>
    <scope>NUCLEOTIDE SEQUENCE [LARGE SCALE GENOMIC DNA]</scope>
    <source>
        <strain>K12 / MG1655 / ATCC 47076</strain>
    </source>
</reference>
<reference key="7">
    <citation type="journal article" date="2006" name="Mol. Syst. Biol.">
        <title>Highly accurate genome sequences of Escherichia coli K-12 strains MG1655 and W3110.</title>
        <authorList>
            <person name="Hayashi K."/>
            <person name="Morooka N."/>
            <person name="Yamamoto Y."/>
            <person name="Fujita K."/>
            <person name="Isono K."/>
            <person name="Choi S."/>
            <person name="Ohtsubo E."/>
            <person name="Baba T."/>
            <person name="Wanner B.L."/>
            <person name="Mori H."/>
            <person name="Horiuchi T."/>
        </authorList>
    </citation>
    <scope>NUCLEOTIDE SEQUENCE [LARGE SCALE GENOMIC DNA]</scope>
    <source>
        <strain>K12 / W3110 / ATCC 27325 / DSM 5911</strain>
    </source>
</reference>
<reference key="8">
    <citation type="journal article" date="1988" name="J. Bacteriol.">
        <title>Nucleotide sequence of aceK, the gene encoding isocitrate dehydrogenase kinase/phosphatase.</title>
        <authorList>
            <person name="Klumpp D.J."/>
            <person name="Plank D.W."/>
            <person name="Bowdin L.J."/>
            <person name="Stueland C.S."/>
            <person name="Chung T."/>
            <person name="Laporte D.C."/>
        </authorList>
    </citation>
    <scope>NUCLEOTIDE SEQUENCE [GENOMIC DNA] OF 293-434</scope>
</reference>
<reference key="9">
    <citation type="journal article" date="1986" name="Curr. Microbiol.">
        <title>Purification and characterization of isocitrate lyase from Escherichia coli.</title>
        <authorList>
            <person name="Robertson E.F."/>
            <person name="Reeves H.C."/>
        </authorList>
    </citation>
    <scope>FUNCTION</scope>
    <scope>CATALYTIC ACTIVITY</scope>
    <scope>BIOPHYSICOCHEMICAL PROPERTIES</scope>
    <scope>SUBUNIT</scope>
</reference>
<reference key="10">
    <citation type="journal article" date="1988" name="Biochem. J.">
        <title>Purification and regulatory properties of isocitrate lyase from Escherichia coli ML308.</title>
        <authorList>
            <person name="MacKintosh C."/>
            <person name="Nimmo H.G."/>
        </authorList>
    </citation>
    <scope>FUNCTION</scope>
    <scope>CATALYTIC ACTIVITY</scope>
    <scope>BIOPHYSICOCHEMICAL PROPERTIES</scope>
    <scope>ACTIVITY REGULATION</scope>
    <scope>SUBUNIT</scope>
    <source>
        <strain>ML308</strain>
    </source>
</reference>
<reference key="11">
    <citation type="journal article" date="1988" name="J. Biol. Chem.">
        <title>Evidence of histidine phosphorylation in isocitrate lyase from Escherichia coli.</title>
        <authorList>
            <person name="Robertson E.F."/>
            <person name="Hoyt J.C."/>
            <person name="Reeves H.C."/>
        </authorList>
    </citation>
    <scope>PHOSPHORYLATION</scope>
    <scope>ACTIVITY REGULATION</scope>
</reference>
<reference key="12">
    <citation type="journal article" date="1988" name="Biochim. Biophys. Acta">
        <title>Escherichia coli isocitrate lyase: properties and comparisons.</title>
        <authorList>
            <person name="Hoyt J.C."/>
            <person name="Robertson E.F."/>
            <person name="Berlyn K.A."/>
            <person name="Reeves H.C."/>
        </authorList>
    </citation>
    <scope>FUNCTION</scope>
    <scope>ACTIVITY REGULATION</scope>
    <scope>COFACTOR</scope>
</reference>
<reference key="13">
    <citation type="journal article" date="1995" name="Biochem. J.">
        <title>Site-directed mutagenesis of cysteine-195 in isocitrate lyase from Escherichia coli ML308.</title>
        <authorList>
            <person name="Robertson A.G."/>
            <person name="Nimmo H.G."/>
        </authorList>
    </citation>
    <scope>FUNCTION</scope>
    <scope>CATALYTIC ACTIVITY</scope>
    <scope>BIOPHYSICOCHEMICAL PROPERTIES</scope>
    <scope>MUTAGENESIS OF CYS-195</scope>
    <scope>ACTIVE SITE</scope>
    <source>
        <strain>ML308</strain>
    </source>
</reference>
<reference key="14">
    <citation type="journal article" date="2005" name="Res. Microbiol.">
        <title>The role of isocitrate lyase and the glyoxylate cycle in Escherichia coli growing under glucose limitation.</title>
        <authorList>
            <person name="Prasad Maharjan R."/>
            <person name="Yu P.L."/>
            <person name="Seeto S."/>
            <person name="Ferenci T."/>
        </authorList>
    </citation>
    <scope>FUNCTION</scope>
    <scope>PATHWAY</scope>
</reference>
<reference key="15">
    <citation type="journal article" date="2001" name="Acta Crystallogr. D">
        <title>The structure and domain organization of Escherichia coli isocitrate lyase.</title>
        <authorList>
            <person name="Britton K.L."/>
            <person name="Abeysinghe I.S."/>
            <person name="Baker P.J."/>
            <person name="Barynin V."/>
            <person name="Diehl P."/>
            <person name="Langridge S.J."/>
            <person name="McFadden B.A."/>
            <person name="Sedelnikova S.E."/>
            <person name="Stillman T.J."/>
            <person name="Weeradechapon K."/>
            <person name="Rice D.W."/>
        </authorList>
    </citation>
    <scope>X-RAY CRYSTALLOGRAPHY (2.10 ANGSTROMS) OF MUTANT CYS-219 IN COMPLEX WITH MAGNESIUM AND SUBSTRATE</scope>
    <scope>MUTAGENESIS OF ALA-219</scope>
    <scope>SUBUNIT</scope>
</reference>
<gene>
    <name evidence="10" type="primary">aceA</name>
    <name type="synonym">icl</name>
    <name type="ordered locus">b4015</name>
    <name type="ordered locus">JW3975</name>
</gene>
<protein>
    <recommendedName>
        <fullName evidence="11">Isocitrate lyase</fullName>
        <shortName evidence="11">ICL</shortName>
        <ecNumber evidence="6 8 9">4.1.3.1</ecNumber>
    </recommendedName>
    <alternativeName>
        <fullName evidence="11">Isocitrase</fullName>
    </alternativeName>
    <alternativeName>
        <fullName evidence="11">Isocitratase</fullName>
    </alternativeName>
</protein>
<name>ACEA_ECOLI</name>
<accession>P0A9G6</accession>
<accession>P05313</accession>
<accession>Q2M6T9</accession>
<keyword id="KW-0002">3D-structure</keyword>
<keyword id="KW-0903">Direct protein sequencing</keyword>
<keyword id="KW-0329">Glyoxylate bypass</keyword>
<keyword id="KW-0456">Lyase</keyword>
<keyword id="KW-0460">Magnesium</keyword>
<keyword id="KW-0464">Manganese</keyword>
<keyword id="KW-0479">Metal-binding</keyword>
<keyword id="KW-0597">Phosphoprotein</keyword>
<keyword id="KW-1185">Reference proteome</keyword>
<keyword id="KW-0816">Tricarboxylic acid cycle</keyword>
<comment type="function">
    <text evidence="3 6 7 8 9">Involved in the metabolic adaptation in response to environmental changes. Catalyzes the reversible formation of succinate and glyoxylate from isocitrate, a key step of the glyoxylate cycle, which operates as an anaplerotic route for replenishing the tricarboxylic acid cycle during growth on fatty acid substrates.</text>
</comment>
<comment type="catalytic activity">
    <reaction evidence="6 8 9">
        <text>D-threo-isocitrate = glyoxylate + succinate</text>
        <dbReference type="Rhea" id="RHEA:13245"/>
        <dbReference type="ChEBI" id="CHEBI:15562"/>
        <dbReference type="ChEBI" id="CHEBI:30031"/>
        <dbReference type="ChEBI" id="CHEBI:36655"/>
        <dbReference type="EC" id="4.1.3.1"/>
    </reaction>
</comment>
<comment type="cofactor">
    <cofactor evidence="7">
        <name>Mg(2+)</name>
        <dbReference type="ChEBI" id="CHEBI:18420"/>
    </cofactor>
    <text evidence="7">Divalent metal cations. Can also use Mn(2+) ion.</text>
</comment>
<comment type="activity regulation">
    <text evidence="5 6 7">Activated by phosphorylation on histidine. Competitively inhibited by 3-phosphosglycerate, oxalate, malate, chloride, phosphate and sulfate ions, and uncompetitively inhibited by succinate and phosphoenolpyruvate (PEP).</text>
</comment>
<comment type="biophysicochemical properties">
    <kinetics>
        <KM evidence="8">0.076 uM for threo-D-isocitrate (at pH 7.3)</KM>
        <KM evidence="9">8 uM for threo-D-isocitrate (at pH 7.5 and 25 degrees Celsius)</KM>
        <KM evidence="6">32 uM for isocitrate (at pH 6.8)</KM>
        <KM evidence="6">63 uM for isocitrate (at pH 7.3)</KM>
        <KM evidence="6">130 uM for glyoxylate (at pH 7.3)</KM>
        <KM evidence="6">590 uM for succinate (at pH 7.3)</KM>
        <text evidence="8">kcat is 28.5 sec(-1) for isocitrate lyase activity with threo-D-isocitrate as substrate (at pH 7.3).</text>
    </kinetics>
    <phDependence>
        <text evidence="9">Optimum pH is 7.3.</text>
    </phDependence>
</comment>
<comment type="pathway">
    <text evidence="13">Carbohydrate metabolism; glyoxylate cycle; (S)-malate from isocitrate: step 1/2.</text>
</comment>
<comment type="subunit">
    <text evidence="2 4 6 9">Homotetramer.</text>
</comment>
<comment type="similarity">
    <text evidence="12">Belongs to the isocitrate lyase/PEP mutase superfamily. Isocitrate lyase family.</text>
</comment>
<sequence>MKTRTQQIEELQKEWTQPRWEGITRPYSAEDVVKLRGSVNPECTLAQLGAAKMWRLLHGESKKGYINSLGALTGGQALQQAKAGIEAVYLSGWQVAADANLAASMYPDQSLYPANSVPAVVERINNTFRRADQIQWSAGIEPGDPRYVDYFLPIVADAEAGFGGVLNAFELMKAMIEAGAAAVHFEDQLASVKKCGHMGGKVLVPTQEAIQKLVAARLAADVTGVPTLLVARTDADAADLITSDCDPYDSEFITGERTSEGFFRTHAGIEQAISRGLAYAPYADLVWCETSTPDLELARRFAQAIHAKYPGKLLAYNCSPSFNWQKNLDDKTIASFQQQLSDMGYKFQFITLAGIHSMWFNMFDLANAYAQGEGMKHYVEKVQQPEFAAAKDGYTFVSHQQEVGTGYFDKVTTIIQGGTSSVTALTGSTEESQF</sequence>
<feature type="initiator methionine" description="Removed" evidence="4">
    <location>
        <position position="1"/>
    </location>
</feature>
<feature type="chain" id="PRO_0000068774" description="Isocitrate lyase">
    <location>
        <begin position="2"/>
        <end position="434"/>
    </location>
</feature>
<feature type="active site" description="Proton acceptor" evidence="8">
    <location>
        <position position="195"/>
    </location>
</feature>
<feature type="binding site" evidence="2">
    <location>
        <begin position="91"/>
        <end position="93"/>
    </location>
    <ligand>
        <name>substrate</name>
    </ligand>
</feature>
<feature type="binding site" evidence="2">
    <location>
        <position position="157"/>
    </location>
    <ligand>
        <name>Mg(2+)</name>
        <dbReference type="ChEBI" id="CHEBI:18420"/>
    </ligand>
</feature>
<feature type="binding site" evidence="1">
    <location>
        <begin position="196"/>
        <end position="197"/>
    </location>
    <ligand>
        <name>substrate</name>
    </ligand>
</feature>
<feature type="binding site" evidence="2">
    <location>
        <position position="232"/>
    </location>
    <ligand>
        <name>substrate</name>
    </ligand>
</feature>
<feature type="binding site" evidence="1">
    <location>
        <begin position="317"/>
        <end position="321"/>
    </location>
    <ligand>
        <name>substrate</name>
    </ligand>
</feature>
<feature type="binding site" evidence="1">
    <location>
        <position position="351"/>
    </location>
    <ligand>
        <name>substrate</name>
    </ligand>
</feature>
<feature type="mutagenesis site" description="Large decrease in activity." evidence="8">
    <original>C</original>
    <variation>A</variation>
    <location>
        <position position="195"/>
    </location>
</feature>
<feature type="mutagenesis site" description="Large decrease in activity." evidence="8">
    <original>C</original>
    <variation>S</variation>
    <location>
        <position position="195"/>
    </location>
</feature>
<feature type="mutagenesis site" description="Isocitrate lyase activity is reduced compared to the wild-type." evidence="2">
    <original>A</original>
    <variation>C</variation>
    <location>
        <position position="219"/>
    </location>
</feature>
<feature type="sequence conflict" description="In Ref. 3; CAA30416." evidence="12" ref="3">
    <original>LAASMYPDQSLYPANSV</original>
    <variation>WRPACIRISRSIRQTRC</variation>
    <location>
        <begin position="101"/>
        <end position="117"/>
    </location>
</feature>
<feature type="sequence conflict" description="In Ref. 3; CAA30416." evidence="12" ref="3">
    <original>A</original>
    <variation>P</variation>
    <location>
        <position position="215"/>
    </location>
</feature>
<feature type="sequence conflict" description="In Ref. 8; AAA24009." evidence="12" ref="8">
    <original>P</original>
    <variation>R</variation>
    <location>
        <position position="293"/>
    </location>
</feature>
<feature type="sequence conflict" description="In Ref. 3; CAA30416." evidence="12" ref="3">
    <original>Q</original>
    <variation>E</variation>
    <location>
        <position position="338"/>
    </location>
</feature>
<feature type="sequence conflict" description="In Ref. 4." evidence="12" ref="4">
    <original>TSSVTALTGSTEESQF</original>
    <variation>DVFSHRADRLH</variation>
    <location>
        <begin position="419"/>
        <end position="434"/>
    </location>
</feature>
<feature type="helix" evidence="14">
    <location>
        <begin position="4"/>
        <end position="14"/>
    </location>
</feature>
<feature type="helix" evidence="14">
    <location>
        <begin position="18"/>
        <end position="20"/>
    </location>
</feature>
<feature type="helix" evidence="14">
    <location>
        <begin position="29"/>
        <end position="34"/>
    </location>
</feature>
<feature type="helix" evidence="14">
    <location>
        <begin position="44"/>
        <end position="57"/>
    </location>
</feature>
<feature type="turn" evidence="14">
    <location>
        <begin position="58"/>
        <end position="60"/>
    </location>
</feature>
<feature type="strand" evidence="14">
    <location>
        <begin position="61"/>
        <end position="70"/>
    </location>
</feature>
<feature type="helix" evidence="14">
    <location>
        <begin position="74"/>
        <end position="83"/>
    </location>
</feature>
<feature type="strand" evidence="14">
    <location>
        <begin position="88"/>
        <end position="90"/>
    </location>
</feature>
<feature type="helix" evidence="14">
    <location>
        <begin position="92"/>
        <end position="98"/>
    </location>
</feature>
<feature type="strand" evidence="14">
    <location>
        <begin position="108"/>
        <end position="110"/>
    </location>
</feature>
<feature type="helix" evidence="14">
    <location>
        <begin position="116"/>
        <end position="137"/>
    </location>
</feature>
<feature type="strand" evidence="14">
    <location>
        <begin position="154"/>
        <end position="157"/>
    </location>
</feature>
<feature type="strand" evidence="14">
    <location>
        <begin position="162"/>
        <end position="164"/>
    </location>
</feature>
<feature type="helix" evidence="14">
    <location>
        <begin position="165"/>
        <end position="177"/>
    </location>
</feature>
<feature type="strand" evidence="14">
    <location>
        <begin position="181"/>
        <end position="188"/>
    </location>
</feature>
<feature type="helix" evidence="14">
    <location>
        <begin position="190"/>
        <end position="192"/>
    </location>
</feature>
<feature type="helix" evidence="14">
    <location>
        <begin position="206"/>
        <end position="223"/>
    </location>
</feature>
<feature type="strand" evidence="14">
    <location>
        <begin position="228"/>
        <end position="233"/>
    </location>
</feature>
<feature type="turn" evidence="14">
    <location>
        <begin position="235"/>
        <end position="237"/>
    </location>
</feature>
<feature type="strand" evidence="14">
    <location>
        <begin position="240"/>
        <end position="242"/>
    </location>
</feature>
<feature type="helix" evidence="14">
    <location>
        <begin position="247"/>
        <end position="252"/>
    </location>
</feature>
<feature type="strand" evidence="14">
    <location>
        <begin position="253"/>
        <end position="257"/>
    </location>
</feature>
<feature type="strand" evidence="14">
    <location>
        <begin position="263"/>
        <end position="265"/>
    </location>
</feature>
<feature type="helix" evidence="14">
    <location>
        <begin position="269"/>
        <end position="279"/>
    </location>
</feature>
<feature type="helix" evidence="14">
    <location>
        <begin position="280"/>
        <end position="282"/>
    </location>
</feature>
<feature type="strand" evidence="14">
    <location>
        <begin position="284"/>
        <end position="288"/>
    </location>
</feature>
<feature type="helix" evidence="14">
    <location>
        <begin position="295"/>
        <end position="308"/>
    </location>
</feature>
<feature type="strand" evidence="14">
    <location>
        <begin position="313"/>
        <end position="317"/>
    </location>
</feature>
<feature type="helix" evidence="14">
    <location>
        <begin position="330"/>
        <end position="334"/>
    </location>
</feature>
<feature type="helix" evidence="14">
    <location>
        <begin position="336"/>
        <end position="343"/>
    </location>
</feature>
<feature type="strand" evidence="14">
    <location>
        <begin position="345"/>
        <end position="350"/>
    </location>
</feature>
<feature type="helix" evidence="14">
    <location>
        <begin position="353"/>
        <end position="371"/>
    </location>
</feature>
<feature type="helix" evidence="14">
    <location>
        <begin position="374"/>
        <end position="381"/>
    </location>
</feature>
<feature type="helix" evidence="14">
    <location>
        <begin position="383"/>
        <end position="390"/>
    </location>
</feature>
<feature type="turn" evidence="14">
    <location>
        <begin position="391"/>
        <end position="393"/>
    </location>
</feature>
<feature type="helix" evidence="14">
    <location>
        <begin position="399"/>
        <end position="402"/>
    </location>
</feature>
<feature type="helix" evidence="14">
    <location>
        <begin position="405"/>
        <end position="415"/>
    </location>
</feature>
<dbReference type="EC" id="4.1.3.1" evidence="6 8 9"/>
<dbReference type="EMBL" id="X12431">
    <property type="protein sequence ID" value="CAA30974.1"/>
    <property type="molecule type" value="Genomic_DNA"/>
</dbReference>
<dbReference type="EMBL" id="X07543">
    <property type="protein sequence ID" value="CAA30416.1"/>
    <property type="molecule type" value="Genomic_DNA"/>
</dbReference>
<dbReference type="EMBL" id="M22621">
    <property type="protein sequence ID" value="AAC13650.1"/>
    <property type="molecule type" value="Genomic_DNA"/>
</dbReference>
<dbReference type="EMBL" id="U00006">
    <property type="protein sequence ID" value="AAC43109.1"/>
    <property type="molecule type" value="Genomic_DNA"/>
</dbReference>
<dbReference type="EMBL" id="U00096">
    <property type="protein sequence ID" value="AAC76985.1"/>
    <property type="molecule type" value="Genomic_DNA"/>
</dbReference>
<dbReference type="EMBL" id="AP009048">
    <property type="protein sequence ID" value="BAE78017.1"/>
    <property type="molecule type" value="Genomic_DNA"/>
</dbReference>
<dbReference type="EMBL" id="M20714">
    <property type="protein sequence ID" value="AAA24009.1"/>
    <property type="molecule type" value="Genomic_DNA"/>
</dbReference>
<dbReference type="PIR" id="S05692">
    <property type="entry name" value="WZECIC"/>
</dbReference>
<dbReference type="RefSeq" id="NP_418439.1">
    <property type="nucleotide sequence ID" value="NC_000913.3"/>
</dbReference>
<dbReference type="RefSeq" id="WP_000857856.1">
    <property type="nucleotide sequence ID" value="NZ_STEB01000022.1"/>
</dbReference>
<dbReference type="PDB" id="1IGW">
    <property type="method" value="X-ray"/>
    <property type="resolution" value="2.10 A"/>
    <property type="chains" value="A/B/C/D=1-434"/>
</dbReference>
<dbReference type="PDBsum" id="1IGW"/>
<dbReference type="SMR" id="P0A9G6"/>
<dbReference type="BioGRID" id="4263469">
    <property type="interactions" value="10"/>
</dbReference>
<dbReference type="DIP" id="DIP-35893N"/>
<dbReference type="FunCoup" id="P0A9G6">
    <property type="interactions" value="506"/>
</dbReference>
<dbReference type="IntAct" id="P0A9G6">
    <property type="interactions" value="3"/>
</dbReference>
<dbReference type="STRING" id="511145.b4015"/>
<dbReference type="jPOST" id="P0A9G6"/>
<dbReference type="PaxDb" id="511145-b4015"/>
<dbReference type="EnsemblBacteria" id="AAC76985">
    <property type="protein sequence ID" value="AAC76985"/>
    <property type="gene ID" value="b4015"/>
</dbReference>
<dbReference type="GeneID" id="75204155"/>
<dbReference type="GeneID" id="948517"/>
<dbReference type="KEGG" id="ecj:JW3975"/>
<dbReference type="KEGG" id="eco:b4015"/>
<dbReference type="KEGG" id="ecoc:C3026_21690"/>
<dbReference type="PATRIC" id="fig|1411691.4.peg.2698"/>
<dbReference type="EchoBASE" id="EB0021"/>
<dbReference type="eggNOG" id="COG2224">
    <property type="taxonomic scope" value="Bacteria"/>
</dbReference>
<dbReference type="HOGENOM" id="CLU_019214_2_0_6"/>
<dbReference type="InParanoid" id="P0A9G6"/>
<dbReference type="OMA" id="YVSGWQV"/>
<dbReference type="OrthoDB" id="8629576at2"/>
<dbReference type="PhylomeDB" id="P0A9G6"/>
<dbReference type="BioCyc" id="EcoCyc:ISOCIT-LYASE-MONOMER"/>
<dbReference type="BioCyc" id="MetaCyc:ISOCIT-LYASE-MONOMER"/>
<dbReference type="BRENDA" id="4.1.3.1">
    <property type="organism ID" value="2026"/>
</dbReference>
<dbReference type="SABIO-RK" id="P0A9G6"/>
<dbReference type="UniPathway" id="UPA00703">
    <property type="reaction ID" value="UER00719"/>
</dbReference>
<dbReference type="EvolutionaryTrace" id="P0A9G6"/>
<dbReference type="PRO" id="PR:P0A9G6"/>
<dbReference type="Proteomes" id="UP000000625">
    <property type="component" value="Chromosome"/>
</dbReference>
<dbReference type="GO" id="GO:0005829">
    <property type="term" value="C:cytosol"/>
    <property type="evidence" value="ECO:0007005"/>
    <property type="project" value="UniProtKB"/>
</dbReference>
<dbReference type="GO" id="GO:0043169">
    <property type="term" value="F:cation binding"/>
    <property type="evidence" value="ECO:0000314"/>
    <property type="project" value="EcoliWiki"/>
</dbReference>
<dbReference type="GO" id="GO:0004451">
    <property type="term" value="F:isocitrate lyase activity"/>
    <property type="evidence" value="ECO:0000314"/>
    <property type="project" value="EcoCyc"/>
</dbReference>
<dbReference type="GO" id="GO:0046872">
    <property type="term" value="F:metal ion binding"/>
    <property type="evidence" value="ECO:0007669"/>
    <property type="project" value="UniProtKB-KW"/>
</dbReference>
<dbReference type="GO" id="GO:0006097">
    <property type="term" value="P:glyoxylate cycle"/>
    <property type="evidence" value="ECO:0000269"/>
    <property type="project" value="EcoCyc"/>
</dbReference>
<dbReference type="GO" id="GO:0006099">
    <property type="term" value="P:tricarboxylic acid cycle"/>
    <property type="evidence" value="ECO:0007669"/>
    <property type="project" value="UniProtKB-KW"/>
</dbReference>
<dbReference type="CDD" id="cd00377">
    <property type="entry name" value="ICL_PEPM"/>
    <property type="match status" value="1"/>
</dbReference>
<dbReference type="FunFam" id="3.20.20.60:FF:000005">
    <property type="entry name" value="Isocitrate lyase"/>
    <property type="match status" value="1"/>
</dbReference>
<dbReference type="Gene3D" id="3.20.20.60">
    <property type="entry name" value="Phosphoenolpyruvate-binding domains"/>
    <property type="match status" value="1"/>
</dbReference>
<dbReference type="InterPro" id="IPR039556">
    <property type="entry name" value="ICL/PEPM"/>
</dbReference>
<dbReference type="InterPro" id="IPR006254">
    <property type="entry name" value="Isocitrate_lyase"/>
</dbReference>
<dbReference type="InterPro" id="IPR018523">
    <property type="entry name" value="Isocitrate_lyase_ph_CS"/>
</dbReference>
<dbReference type="InterPro" id="IPR015813">
    <property type="entry name" value="Pyrv/PenolPyrv_kinase-like_dom"/>
</dbReference>
<dbReference type="InterPro" id="IPR040442">
    <property type="entry name" value="Pyrv_kinase-like_dom_sf"/>
</dbReference>
<dbReference type="NCBIfam" id="TIGR01346">
    <property type="entry name" value="isocit_lyase"/>
    <property type="match status" value="2"/>
</dbReference>
<dbReference type="NCBIfam" id="NF011645">
    <property type="entry name" value="PRK15063.1"/>
    <property type="match status" value="1"/>
</dbReference>
<dbReference type="PANTHER" id="PTHR21631:SF3">
    <property type="entry name" value="BIFUNCTIONAL GLYOXYLATE CYCLE PROTEIN"/>
    <property type="match status" value="1"/>
</dbReference>
<dbReference type="PANTHER" id="PTHR21631">
    <property type="entry name" value="ISOCITRATE LYASE/MALATE SYNTHASE"/>
    <property type="match status" value="1"/>
</dbReference>
<dbReference type="Pfam" id="PF00463">
    <property type="entry name" value="ICL"/>
    <property type="match status" value="2"/>
</dbReference>
<dbReference type="PIRSF" id="PIRSF001362">
    <property type="entry name" value="Isocit_lyase"/>
    <property type="match status" value="1"/>
</dbReference>
<dbReference type="SUPFAM" id="SSF51621">
    <property type="entry name" value="Phosphoenolpyruvate/pyruvate domain"/>
    <property type="match status" value="1"/>
</dbReference>
<dbReference type="PROSITE" id="PS00161">
    <property type="entry name" value="ISOCITRATE_LYASE"/>
    <property type="match status" value="1"/>
</dbReference>